<reference key="1">
    <citation type="journal article" date="2009" name="Appl. Environ. Microbiol.">
        <title>Three genomes from the phylum Acidobacteria provide insight into the lifestyles of these microorganisms in soils.</title>
        <authorList>
            <person name="Ward N.L."/>
            <person name="Challacombe J.F."/>
            <person name="Janssen P.H."/>
            <person name="Henrissat B."/>
            <person name="Coutinho P.M."/>
            <person name="Wu M."/>
            <person name="Xie G."/>
            <person name="Haft D.H."/>
            <person name="Sait M."/>
            <person name="Badger J."/>
            <person name="Barabote R.D."/>
            <person name="Bradley B."/>
            <person name="Brettin T.S."/>
            <person name="Brinkac L.M."/>
            <person name="Bruce D."/>
            <person name="Creasy T."/>
            <person name="Daugherty S.C."/>
            <person name="Davidsen T.M."/>
            <person name="DeBoy R.T."/>
            <person name="Detter J.C."/>
            <person name="Dodson R.J."/>
            <person name="Durkin A.S."/>
            <person name="Ganapathy A."/>
            <person name="Gwinn-Giglio M."/>
            <person name="Han C.S."/>
            <person name="Khouri H."/>
            <person name="Kiss H."/>
            <person name="Kothari S.P."/>
            <person name="Madupu R."/>
            <person name="Nelson K.E."/>
            <person name="Nelson W.C."/>
            <person name="Paulsen I."/>
            <person name="Penn K."/>
            <person name="Ren Q."/>
            <person name="Rosovitz M.J."/>
            <person name="Selengut J.D."/>
            <person name="Shrivastava S."/>
            <person name="Sullivan S.A."/>
            <person name="Tapia R."/>
            <person name="Thompson L.S."/>
            <person name="Watkins K.L."/>
            <person name="Yang Q."/>
            <person name="Yu C."/>
            <person name="Zafar N."/>
            <person name="Zhou L."/>
            <person name="Kuske C.R."/>
        </authorList>
    </citation>
    <scope>NUCLEOTIDE SEQUENCE [LARGE SCALE GENOMIC DNA]</scope>
    <source>
        <strain>Ellin345</strain>
    </source>
</reference>
<dbReference type="EC" id="2.1.1.74" evidence="1"/>
<dbReference type="EMBL" id="CP000360">
    <property type="protein sequence ID" value="ABF43629.1"/>
    <property type="molecule type" value="Genomic_DNA"/>
</dbReference>
<dbReference type="RefSeq" id="WP_011525426.1">
    <property type="nucleotide sequence ID" value="NC_008009.1"/>
</dbReference>
<dbReference type="SMR" id="Q1IHM1"/>
<dbReference type="STRING" id="204669.Acid345_4629"/>
<dbReference type="EnsemblBacteria" id="ABF43629">
    <property type="protein sequence ID" value="ABF43629"/>
    <property type="gene ID" value="Acid345_4629"/>
</dbReference>
<dbReference type="KEGG" id="aba:Acid345_4629"/>
<dbReference type="eggNOG" id="COG1206">
    <property type="taxonomic scope" value="Bacteria"/>
</dbReference>
<dbReference type="HOGENOM" id="CLU_033057_1_0_0"/>
<dbReference type="OrthoDB" id="9803114at2"/>
<dbReference type="Proteomes" id="UP000002432">
    <property type="component" value="Chromosome"/>
</dbReference>
<dbReference type="GO" id="GO:0005829">
    <property type="term" value="C:cytosol"/>
    <property type="evidence" value="ECO:0007669"/>
    <property type="project" value="TreeGrafter"/>
</dbReference>
<dbReference type="GO" id="GO:0050660">
    <property type="term" value="F:flavin adenine dinucleotide binding"/>
    <property type="evidence" value="ECO:0007669"/>
    <property type="project" value="UniProtKB-UniRule"/>
</dbReference>
<dbReference type="GO" id="GO:0047151">
    <property type="term" value="F:tRNA (uracil(54)-C5)-methyltransferase activity, 5,10-methylenetetrahydrofolate-dependent"/>
    <property type="evidence" value="ECO:0007669"/>
    <property type="project" value="UniProtKB-UniRule"/>
</dbReference>
<dbReference type="GO" id="GO:0030488">
    <property type="term" value="P:tRNA methylation"/>
    <property type="evidence" value="ECO:0007669"/>
    <property type="project" value="TreeGrafter"/>
</dbReference>
<dbReference type="GO" id="GO:0002098">
    <property type="term" value="P:tRNA wobble uridine modification"/>
    <property type="evidence" value="ECO:0007669"/>
    <property type="project" value="TreeGrafter"/>
</dbReference>
<dbReference type="Gene3D" id="3.50.50.60">
    <property type="entry name" value="FAD/NAD(P)-binding domain"/>
    <property type="match status" value="2"/>
</dbReference>
<dbReference type="HAMAP" id="MF_01037">
    <property type="entry name" value="TrmFO"/>
    <property type="match status" value="1"/>
</dbReference>
<dbReference type="InterPro" id="IPR036188">
    <property type="entry name" value="FAD/NAD-bd_sf"/>
</dbReference>
<dbReference type="InterPro" id="IPR002218">
    <property type="entry name" value="MnmG-rel"/>
</dbReference>
<dbReference type="InterPro" id="IPR040131">
    <property type="entry name" value="MnmG_N"/>
</dbReference>
<dbReference type="InterPro" id="IPR004417">
    <property type="entry name" value="TrmFO"/>
</dbReference>
<dbReference type="NCBIfam" id="TIGR00137">
    <property type="entry name" value="gid_trmFO"/>
    <property type="match status" value="1"/>
</dbReference>
<dbReference type="NCBIfam" id="NF003739">
    <property type="entry name" value="PRK05335.1"/>
    <property type="match status" value="1"/>
</dbReference>
<dbReference type="PANTHER" id="PTHR11806">
    <property type="entry name" value="GLUCOSE INHIBITED DIVISION PROTEIN A"/>
    <property type="match status" value="1"/>
</dbReference>
<dbReference type="PANTHER" id="PTHR11806:SF2">
    <property type="entry name" value="METHYLENETETRAHYDROFOLATE--TRNA-(URACIL-5-)-METHYLTRANSFERASE TRMFO"/>
    <property type="match status" value="1"/>
</dbReference>
<dbReference type="Pfam" id="PF01134">
    <property type="entry name" value="GIDA"/>
    <property type="match status" value="1"/>
</dbReference>
<dbReference type="SUPFAM" id="SSF51905">
    <property type="entry name" value="FAD/NAD(P)-binding domain"/>
    <property type="match status" value="1"/>
</dbReference>
<name>TRMFO_KORVE</name>
<comment type="function">
    <text evidence="1">Catalyzes the folate-dependent formation of 5-methyl-uridine at position 54 (M-5-U54) in all tRNAs.</text>
</comment>
<comment type="catalytic activity">
    <reaction evidence="1">
        <text>uridine(54) in tRNA + (6R)-5,10-methylene-5,6,7,8-tetrahydrofolate + NADH + H(+) = 5-methyluridine(54) in tRNA + (6S)-5,6,7,8-tetrahydrofolate + NAD(+)</text>
        <dbReference type="Rhea" id="RHEA:16873"/>
        <dbReference type="Rhea" id="RHEA-COMP:10167"/>
        <dbReference type="Rhea" id="RHEA-COMP:10193"/>
        <dbReference type="ChEBI" id="CHEBI:15378"/>
        <dbReference type="ChEBI" id="CHEBI:15636"/>
        <dbReference type="ChEBI" id="CHEBI:57453"/>
        <dbReference type="ChEBI" id="CHEBI:57540"/>
        <dbReference type="ChEBI" id="CHEBI:57945"/>
        <dbReference type="ChEBI" id="CHEBI:65315"/>
        <dbReference type="ChEBI" id="CHEBI:74447"/>
        <dbReference type="EC" id="2.1.1.74"/>
    </reaction>
</comment>
<comment type="catalytic activity">
    <reaction evidence="1">
        <text>uridine(54) in tRNA + (6R)-5,10-methylene-5,6,7,8-tetrahydrofolate + NADPH + H(+) = 5-methyluridine(54) in tRNA + (6S)-5,6,7,8-tetrahydrofolate + NADP(+)</text>
        <dbReference type="Rhea" id="RHEA:62372"/>
        <dbReference type="Rhea" id="RHEA-COMP:10167"/>
        <dbReference type="Rhea" id="RHEA-COMP:10193"/>
        <dbReference type="ChEBI" id="CHEBI:15378"/>
        <dbReference type="ChEBI" id="CHEBI:15636"/>
        <dbReference type="ChEBI" id="CHEBI:57453"/>
        <dbReference type="ChEBI" id="CHEBI:57783"/>
        <dbReference type="ChEBI" id="CHEBI:58349"/>
        <dbReference type="ChEBI" id="CHEBI:65315"/>
        <dbReference type="ChEBI" id="CHEBI:74447"/>
        <dbReference type="EC" id="2.1.1.74"/>
    </reaction>
</comment>
<comment type="cofactor">
    <cofactor evidence="1">
        <name>FAD</name>
        <dbReference type="ChEBI" id="CHEBI:57692"/>
    </cofactor>
</comment>
<comment type="subcellular location">
    <subcellularLocation>
        <location evidence="1">Cytoplasm</location>
    </subcellularLocation>
</comment>
<comment type="similarity">
    <text evidence="1">Belongs to the MnmG family. TrmFO subfamily.</text>
</comment>
<gene>
    <name evidence="1" type="primary">trmFO</name>
    <name type="ordered locus">Acid345_4629</name>
</gene>
<accession>Q1IHM1</accession>
<protein>
    <recommendedName>
        <fullName evidence="1">Methylenetetrahydrofolate--tRNA-(uracil-5-)-methyltransferase TrmFO</fullName>
        <ecNumber evidence="1">2.1.1.74</ecNumber>
    </recommendedName>
    <alternativeName>
        <fullName evidence="1">Folate-dependent tRNA (uracil-5-)-methyltransferase</fullName>
    </alternativeName>
    <alternativeName>
        <fullName evidence="1">Folate-dependent tRNA(M-5-U54)-methyltransferase</fullName>
    </alternativeName>
</protein>
<evidence type="ECO:0000255" key="1">
    <source>
        <dbReference type="HAMAP-Rule" id="MF_01037"/>
    </source>
</evidence>
<proteinExistence type="inferred from homology"/>
<feature type="chain" id="PRO_0000346316" description="Methylenetetrahydrofolate--tRNA-(uracil-5-)-methyltransferase TrmFO">
    <location>
        <begin position="1"/>
        <end position="444"/>
    </location>
</feature>
<feature type="binding site" evidence="1">
    <location>
        <begin position="9"/>
        <end position="14"/>
    </location>
    <ligand>
        <name>FAD</name>
        <dbReference type="ChEBI" id="CHEBI:57692"/>
    </ligand>
</feature>
<keyword id="KW-0963">Cytoplasm</keyword>
<keyword id="KW-0274">FAD</keyword>
<keyword id="KW-0285">Flavoprotein</keyword>
<keyword id="KW-0489">Methyltransferase</keyword>
<keyword id="KW-0520">NAD</keyword>
<keyword id="KW-0521">NADP</keyword>
<keyword id="KW-1185">Reference proteome</keyword>
<keyword id="KW-0808">Transferase</keyword>
<keyword id="KW-0819">tRNA processing</keyword>
<organism>
    <name type="scientific">Koribacter versatilis (strain Ellin345)</name>
    <dbReference type="NCBI Taxonomy" id="204669"/>
    <lineage>
        <taxon>Bacteria</taxon>
        <taxon>Pseudomonadati</taxon>
        <taxon>Acidobacteriota</taxon>
        <taxon>Terriglobia</taxon>
        <taxon>Terriglobales</taxon>
        <taxon>Candidatus Korobacteraceae</taxon>
        <taxon>Candidatus Korobacter</taxon>
    </lineage>
</organism>
<sequence>MNLKIRIIGAGLAGCEAAWQCARRGLDVELYEMRPVKSTPAHQTSDFAELVCSNSLKSAGENSAPWLLKEEMRRGGSLLLEIAQKTSVPAGHALAVDRGAFAAEVTRVIEAEPRIRVVRGEVTKIDENDALTVIATGPLTSDALSQEIARLSGNTHLYFYDSISPIVEADSIDMSRVYMAARYDKGTADYINCPMNKEEYDRFLDALIEAHSVDAKEWENLNYFEGCLPIEEIARRGRDTLRFGPMKPVGLTDPKTGRYPYAVVQLRQENLRADSYNLVGFQNHLKYGDQARVMRLIPGLENAKFLRYGQIHRNTYINSPTLLTETLRMKEHPNVFFAGQISGVEGYVESIATGQMAGMHVSTVAMGHEPVAPPRATAFGSLVNYICHAEAKHFQPANITFDLLPQLDEAARRKVRDKKERHRMVCEAALKEFDGWLATSQIFQ</sequence>